<comment type="function">
    <text evidence="1">Specifically methylates the N4 position of cytidine in position 1402 (C1402) of 16S rRNA.</text>
</comment>
<comment type="catalytic activity">
    <reaction evidence="1">
        <text>cytidine(1402) in 16S rRNA + S-adenosyl-L-methionine = N(4)-methylcytidine(1402) in 16S rRNA + S-adenosyl-L-homocysteine + H(+)</text>
        <dbReference type="Rhea" id="RHEA:42928"/>
        <dbReference type="Rhea" id="RHEA-COMP:10286"/>
        <dbReference type="Rhea" id="RHEA-COMP:10287"/>
        <dbReference type="ChEBI" id="CHEBI:15378"/>
        <dbReference type="ChEBI" id="CHEBI:57856"/>
        <dbReference type="ChEBI" id="CHEBI:59789"/>
        <dbReference type="ChEBI" id="CHEBI:74506"/>
        <dbReference type="ChEBI" id="CHEBI:82748"/>
        <dbReference type="EC" id="2.1.1.199"/>
    </reaction>
</comment>
<comment type="subcellular location">
    <subcellularLocation>
        <location evidence="1">Cytoplasm</location>
    </subcellularLocation>
</comment>
<comment type="similarity">
    <text evidence="1">Belongs to the methyltransferase superfamily. RsmH family.</text>
</comment>
<accession>C1F466</accession>
<dbReference type="EC" id="2.1.1.199" evidence="1"/>
<dbReference type="EMBL" id="CP001472">
    <property type="protein sequence ID" value="ACO32412.1"/>
    <property type="molecule type" value="Genomic_DNA"/>
</dbReference>
<dbReference type="RefSeq" id="WP_015896252.1">
    <property type="nucleotide sequence ID" value="NC_012483.1"/>
</dbReference>
<dbReference type="SMR" id="C1F466"/>
<dbReference type="FunCoup" id="C1F466">
    <property type="interactions" value="557"/>
</dbReference>
<dbReference type="STRING" id="240015.ACP_1094"/>
<dbReference type="KEGG" id="aca:ACP_1094"/>
<dbReference type="eggNOG" id="COG0275">
    <property type="taxonomic scope" value="Bacteria"/>
</dbReference>
<dbReference type="HOGENOM" id="CLU_038422_3_0_0"/>
<dbReference type="InParanoid" id="C1F466"/>
<dbReference type="OrthoDB" id="9806637at2"/>
<dbReference type="Proteomes" id="UP000002207">
    <property type="component" value="Chromosome"/>
</dbReference>
<dbReference type="GO" id="GO:0005737">
    <property type="term" value="C:cytoplasm"/>
    <property type="evidence" value="ECO:0007669"/>
    <property type="project" value="UniProtKB-SubCell"/>
</dbReference>
<dbReference type="GO" id="GO:0071424">
    <property type="term" value="F:rRNA (cytosine-N4-)-methyltransferase activity"/>
    <property type="evidence" value="ECO:0007669"/>
    <property type="project" value="UniProtKB-UniRule"/>
</dbReference>
<dbReference type="GO" id="GO:0070475">
    <property type="term" value="P:rRNA base methylation"/>
    <property type="evidence" value="ECO:0007669"/>
    <property type="project" value="UniProtKB-UniRule"/>
</dbReference>
<dbReference type="FunFam" id="1.10.150.170:FF:000003">
    <property type="entry name" value="Ribosomal RNA small subunit methyltransferase H"/>
    <property type="match status" value="1"/>
</dbReference>
<dbReference type="Gene3D" id="1.10.150.170">
    <property type="entry name" value="Putative methyltransferase TM0872, insert domain"/>
    <property type="match status" value="1"/>
</dbReference>
<dbReference type="Gene3D" id="3.40.50.150">
    <property type="entry name" value="Vaccinia Virus protein VP39"/>
    <property type="match status" value="1"/>
</dbReference>
<dbReference type="HAMAP" id="MF_01007">
    <property type="entry name" value="16SrRNA_methyltr_H"/>
    <property type="match status" value="1"/>
</dbReference>
<dbReference type="InterPro" id="IPR002903">
    <property type="entry name" value="RsmH"/>
</dbReference>
<dbReference type="InterPro" id="IPR023397">
    <property type="entry name" value="SAM-dep_MeTrfase_MraW_recog"/>
</dbReference>
<dbReference type="InterPro" id="IPR029063">
    <property type="entry name" value="SAM-dependent_MTases_sf"/>
</dbReference>
<dbReference type="NCBIfam" id="TIGR00006">
    <property type="entry name" value="16S rRNA (cytosine(1402)-N(4))-methyltransferase RsmH"/>
    <property type="match status" value="1"/>
</dbReference>
<dbReference type="PANTHER" id="PTHR11265:SF0">
    <property type="entry name" value="12S RRNA N4-METHYLCYTIDINE METHYLTRANSFERASE"/>
    <property type="match status" value="1"/>
</dbReference>
<dbReference type="PANTHER" id="PTHR11265">
    <property type="entry name" value="S-ADENOSYL-METHYLTRANSFERASE MRAW"/>
    <property type="match status" value="1"/>
</dbReference>
<dbReference type="Pfam" id="PF01795">
    <property type="entry name" value="Methyltransf_5"/>
    <property type="match status" value="1"/>
</dbReference>
<dbReference type="PIRSF" id="PIRSF004486">
    <property type="entry name" value="MraW"/>
    <property type="match status" value="1"/>
</dbReference>
<dbReference type="SUPFAM" id="SSF81799">
    <property type="entry name" value="Putative methyltransferase TM0872, insert domain"/>
    <property type="match status" value="1"/>
</dbReference>
<dbReference type="SUPFAM" id="SSF53335">
    <property type="entry name" value="S-adenosyl-L-methionine-dependent methyltransferases"/>
    <property type="match status" value="1"/>
</dbReference>
<proteinExistence type="inferred from homology"/>
<sequence length="297" mass="32714">MERERHVPVLLQDAIRYLNVRRGGTYADATLGLAGHSSAIARLLGPGGTLIAFDRDPEAMELAKSRLDALRAELGSEMPKVILHSTEFSEAEDLIEPGSLDGLLADFGVSSLQFDEAHRGFSFQADGPLDMRMNPRVGLTAAQVVNQFGEKELADLIYEFGEERRSRRIARAIVRARPVSTTAQLARVVSAAAPAMKSERIHPATRTFQALRIYVNQELGQIEALLKVAPKLLRKGGRLVVISFHSLEDRIAKDALREGGQQGIYEVLTRKPLTAGEEETDRNPRARSAKLRAAEKK</sequence>
<protein>
    <recommendedName>
        <fullName evidence="1">Ribosomal RNA small subunit methyltransferase H</fullName>
        <ecNumber evidence="1">2.1.1.199</ecNumber>
    </recommendedName>
    <alternativeName>
        <fullName evidence="1">16S rRNA m(4)C1402 methyltransferase</fullName>
    </alternativeName>
    <alternativeName>
        <fullName evidence="1">rRNA (cytosine-N(4)-)-methyltransferase RsmH</fullName>
    </alternativeName>
</protein>
<evidence type="ECO:0000255" key="1">
    <source>
        <dbReference type="HAMAP-Rule" id="MF_01007"/>
    </source>
</evidence>
<evidence type="ECO:0000256" key="2">
    <source>
        <dbReference type="SAM" id="MobiDB-lite"/>
    </source>
</evidence>
<feature type="chain" id="PRO_0000386684" description="Ribosomal RNA small subunit methyltransferase H">
    <location>
        <begin position="1"/>
        <end position="297"/>
    </location>
</feature>
<feature type="region of interest" description="Disordered" evidence="2">
    <location>
        <begin position="272"/>
        <end position="297"/>
    </location>
</feature>
<feature type="binding site" evidence="1">
    <location>
        <begin position="34"/>
        <end position="36"/>
    </location>
    <ligand>
        <name>S-adenosyl-L-methionine</name>
        <dbReference type="ChEBI" id="CHEBI:59789"/>
    </ligand>
</feature>
<feature type="binding site" evidence="1">
    <location>
        <position position="54"/>
    </location>
    <ligand>
        <name>S-adenosyl-L-methionine</name>
        <dbReference type="ChEBI" id="CHEBI:59789"/>
    </ligand>
</feature>
<feature type="binding site" evidence="1">
    <location>
        <position position="88"/>
    </location>
    <ligand>
        <name>S-adenosyl-L-methionine</name>
        <dbReference type="ChEBI" id="CHEBI:59789"/>
    </ligand>
</feature>
<feature type="binding site" evidence="1">
    <location>
        <position position="106"/>
    </location>
    <ligand>
        <name>S-adenosyl-L-methionine</name>
        <dbReference type="ChEBI" id="CHEBI:59789"/>
    </ligand>
</feature>
<feature type="binding site" evidence="1">
    <location>
        <position position="113"/>
    </location>
    <ligand>
        <name>S-adenosyl-L-methionine</name>
        <dbReference type="ChEBI" id="CHEBI:59789"/>
    </ligand>
</feature>
<organism>
    <name type="scientific">Acidobacterium capsulatum (strain ATCC 51196 / DSM 11244 / BCRC 80197 / JCM 7670 / NBRC 15755 / NCIMB 13165 / 161)</name>
    <dbReference type="NCBI Taxonomy" id="240015"/>
    <lineage>
        <taxon>Bacteria</taxon>
        <taxon>Pseudomonadati</taxon>
        <taxon>Acidobacteriota</taxon>
        <taxon>Terriglobia</taxon>
        <taxon>Terriglobales</taxon>
        <taxon>Acidobacteriaceae</taxon>
        <taxon>Acidobacterium</taxon>
    </lineage>
</organism>
<gene>
    <name evidence="1" type="primary">rsmH</name>
    <name type="synonym">mraW</name>
    <name type="ordered locus">ACP_1094</name>
</gene>
<reference key="1">
    <citation type="journal article" date="2009" name="Appl. Environ. Microbiol.">
        <title>Three genomes from the phylum Acidobacteria provide insight into the lifestyles of these microorganisms in soils.</title>
        <authorList>
            <person name="Ward N.L."/>
            <person name="Challacombe J.F."/>
            <person name="Janssen P.H."/>
            <person name="Henrissat B."/>
            <person name="Coutinho P.M."/>
            <person name="Wu M."/>
            <person name="Xie G."/>
            <person name="Haft D.H."/>
            <person name="Sait M."/>
            <person name="Badger J."/>
            <person name="Barabote R.D."/>
            <person name="Bradley B."/>
            <person name="Brettin T.S."/>
            <person name="Brinkac L.M."/>
            <person name="Bruce D."/>
            <person name="Creasy T."/>
            <person name="Daugherty S.C."/>
            <person name="Davidsen T.M."/>
            <person name="DeBoy R.T."/>
            <person name="Detter J.C."/>
            <person name="Dodson R.J."/>
            <person name="Durkin A.S."/>
            <person name="Ganapathy A."/>
            <person name="Gwinn-Giglio M."/>
            <person name="Han C.S."/>
            <person name="Khouri H."/>
            <person name="Kiss H."/>
            <person name="Kothari S.P."/>
            <person name="Madupu R."/>
            <person name="Nelson K.E."/>
            <person name="Nelson W.C."/>
            <person name="Paulsen I."/>
            <person name="Penn K."/>
            <person name="Ren Q."/>
            <person name="Rosovitz M.J."/>
            <person name="Selengut J.D."/>
            <person name="Shrivastava S."/>
            <person name="Sullivan S.A."/>
            <person name="Tapia R."/>
            <person name="Thompson L.S."/>
            <person name="Watkins K.L."/>
            <person name="Yang Q."/>
            <person name="Yu C."/>
            <person name="Zafar N."/>
            <person name="Zhou L."/>
            <person name="Kuske C.R."/>
        </authorList>
    </citation>
    <scope>NUCLEOTIDE SEQUENCE [LARGE SCALE GENOMIC DNA]</scope>
    <source>
        <strain>ATCC 51196 / DSM 11244 / BCRC 80197 / JCM 7670 / NBRC 15755 / NCIMB 13165 / 161</strain>
    </source>
</reference>
<keyword id="KW-0963">Cytoplasm</keyword>
<keyword id="KW-0489">Methyltransferase</keyword>
<keyword id="KW-1185">Reference proteome</keyword>
<keyword id="KW-0698">rRNA processing</keyword>
<keyword id="KW-0949">S-adenosyl-L-methionine</keyword>
<keyword id="KW-0808">Transferase</keyword>
<name>RSMH_ACIC5</name>